<evidence type="ECO:0000255" key="1">
    <source>
        <dbReference type="HAMAP-Rule" id="MF_00185"/>
    </source>
</evidence>
<sequence length="297" mass="34189">MTFPILILAAPTGAGKTSLITELDPTRFEILSFDSRQIYREMPIGTAAPTKEQQSKIRHHLVEVLSPKESIDAGLYNRMAEEALQKVLNTDKIPVFTAGTGFYLKAFLFGMFPVPEISVSVRERVLSMSIEEKKVLLNDLDPEALDKIFSGDDYRLGRALEVNLMGEKWSRLKIDPNTSAIYKYNLEIRLGIFLDLDRKELYERINLRAKRMIDLGMADEAWEIRERYGESCPGLKSLGYNFALENKKGNSNVETFLVDLSQSHRNYAKRQITWFRKENYIQAMDRSEALERIKHIK</sequence>
<accession>Q8CXT5</accession>
<proteinExistence type="inferred from homology"/>
<comment type="function">
    <text evidence="1">Catalyzes the transfer of a dimethylallyl group onto the adenine at position 37 in tRNAs that read codons beginning with uridine, leading to the formation of N6-(dimethylallyl)adenosine (i(6)A).</text>
</comment>
<comment type="catalytic activity">
    <reaction evidence="1">
        <text>adenosine(37) in tRNA + dimethylallyl diphosphate = N(6)-dimethylallyladenosine(37) in tRNA + diphosphate</text>
        <dbReference type="Rhea" id="RHEA:26482"/>
        <dbReference type="Rhea" id="RHEA-COMP:10162"/>
        <dbReference type="Rhea" id="RHEA-COMP:10375"/>
        <dbReference type="ChEBI" id="CHEBI:33019"/>
        <dbReference type="ChEBI" id="CHEBI:57623"/>
        <dbReference type="ChEBI" id="CHEBI:74411"/>
        <dbReference type="ChEBI" id="CHEBI:74415"/>
        <dbReference type="EC" id="2.5.1.75"/>
    </reaction>
</comment>
<comment type="cofactor">
    <cofactor evidence="1">
        <name>Mg(2+)</name>
        <dbReference type="ChEBI" id="CHEBI:18420"/>
    </cofactor>
</comment>
<comment type="subunit">
    <text evidence="1">Monomer.</text>
</comment>
<comment type="similarity">
    <text evidence="1">Belongs to the IPP transferase family.</text>
</comment>
<reference key="1">
    <citation type="journal article" date="2003" name="Nature">
        <title>Unique physiological and pathogenic features of Leptospira interrogans revealed by whole-genome sequencing.</title>
        <authorList>
            <person name="Ren S.-X."/>
            <person name="Fu G."/>
            <person name="Jiang X.-G."/>
            <person name="Zeng R."/>
            <person name="Miao Y.-G."/>
            <person name="Xu H."/>
            <person name="Zhang Y.-X."/>
            <person name="Xiong H."/>
            <person name="Lu G."/>
            <person name="Lu L.-F."/>
            <person name="Jiang H.-Q."/>
            <person name="Jia J."/>
            <person name="Tu Y.-F."/>
            <person name="Jiang J.-X."/>
            <person name="Gu W.-Y."/>
            <person name="Zhang Y.-Q."/>
            <person name="Cai Z."/>
            <person name="Sheng H.-H."/>
            <person name="Yin H.-F."/>
            <person name="Zhang Y."/>
            <person name="Zhu G.-F."/>
            <person name="Wan M."/>
            <person name="Huang H.-L."/>
            <person name="Qian Z."/>
            <person name="Wang S.-Y."/>
            <person name="Ma W."/>
            <person name="Yao Z.-J."/>
            <person name="Shen Y."/>
            <person name="Qiang B.-Q."/>
            <person name="Xia Q.-C."/>
            <person name="Guo X.-K."/>
            <person name="Danchin A."/>
            <person name="Saint Girons I."/>
            <person name="Somerville R.L."/>
            <person name="Wen Y.-M."/>
            <person name="Shi M.-H."/>
            <person name="Chen Z."/>
            <person name="Xu J.-G."/>
            <person name="Zhao G.-P."/>
        </authorList>
    </citation>
    <scope>NUCLEOTIDE SEQUENCE [LARGE SCALE GENOMIC DNA]</scope>
    <source>
        <strain>56601</strain>
    </source>
</reference>
<dbReference type="EC" id="2.5.1.75" evidence="1"/>
<dbReference type="EMBL" id="AE010300">
    <property type="protein sequence ID" value="AAN48715.1"/>
    <property type="molecule type" value="Genomic_DNA"/>
</dbReference>
<dbReference type="RefSeq" id="NP_711697.1">
    <property type="nucleotide sequence ID" value="NC_004342.2"/>
</dbReference>
<dbReference type="RefSeq" id="WP_000143821.1">
    <property type="nucleotide sequence ID" value="NC_004342.2"/>
</dbReference>
<dbReference type="SMR" id="Q8CXT5"/>
<dbReference type="FunCoup" id="Q8CXT5">
    <property type="interactions" value="436"/>
</dbReference>
<dbReference type="STRING" id="189518.LA_1516"/>
<dbReference type="PaxDb" id="189518-LA_1516"/>
<dbReference type="EnsemblBacteria" id="AAN48715">
    <property type="protein sequence ID" value="AAN48715"/>
    <property type="gene ID" value="LA_1516"/>
</dbReference>
<dbReference type="GeneID" id="61142132"/>
<dbReference type="KEGG" id="lil:LA_1516"/>
<dbReference type="PATRIC" id="fig|189518.3.peg.1515"/>
<dbReference type="HOGENOM" id="CLU_032616_0_1_12"/>
<dbReference type="InParanoid" id="Q8CXT5"/>
<dbReference type="OrthoDB" id="9776390at2"/>
<dbReference type="Proteomes" id="UP000001408">
    <property type="component" value="Chromosome I"/>
</dbReference>
<dbReference type="GO" id="GO:0005524">
    <property type="term" value="F:ATP binding"/>
    <property type="evidence" value="ECO:0007669"/>
    <property type="project" value="UniProtKB-UniRule"/>
</dbReference>
<dbReference type="GO" id="GO:0052381">
    <property type="term" value="F:tRNA dimethylallyltransferase activity"/>
    <property type="evidence" value="ECO:0000318"/>
    <property type="project" value="GO_Central"/>
</dbReference>
<dbReference type="GO" id="GO:0006400">
    <property type="term" value="P:tRNA modification"/>
    <property type="evidence" value="ECO:0000318"/>
    <property type="project" value="GO_Central"/>
</dbReference>
<dbReference type="Gene3D" id="1.10.287.890">
    <property type="entry name" value="Crystal structure of tRNA isopentenylpyrophosphate transferase (bh2366) domain"/>
    <property type="match status" value="1"/>
</dbReference>
<dbReference type="Gene3D" id="3.40.50.300">
    <property type="entry name" value="P-loop containing nucleotide triphosphate hydrolases"/>
    <property type="match status" value="1"/>
</dbReference>
<dbReference type="HAMAP" id="MF_00185">
    <property type="entry name" value="IPP_trans"/>
    <property type="match status" value="1"/>
</dbReference>
<dbReference type="InterPro" id="IPR039657">
    <property type="entry name" value="Dimethylallyltransferase"/>
</dbReference>
<dbReference type="InterPro" id="IPR018022">
    <property type="entry name" value="IPT"/>
</dbReference>
<dbReference type="InterPro" id="IPR027417">
    <property type="entry name" value="P-loop_NTPase"/>
</dbReference>
<dbReference type="NCBIfam" id="TIGR00174">
    <property type="entry name" value="miaA"/>
    <property type="match status" value="1"/>
</dbReference>
<dbReference type="PANTHER" id="PTHR11088">
    <property type="entry name" value="TRNA DIMETHYLALLYLTRANSFERASE"/>
    <property type="match status" value="1"/>
</dbReference>
<dbReference type="PANTHER" id="PTHR11088:SF60">
    <property type="entry name" value="TRNA DIMETHYLALLYLTRANSFERASE"/>
    <property type="match status" value="1"/>
</dbReference>
<dbReference type="Pfam" id="PF01715">
    <property type="entry name" value="IPPT"/>
    <property type="match status" value="1"/>
</dbReference>
<dbReference type="SUPFAM" id="SSF52540">
    <property type="entry name" value="P-loop containing nucleoside triphosphate hydrolases"/>
    <property type="match status" value="1"/>
</dbReference>
<gene>
    <name evidence="1" type="primary">miaA</name>
    <name type="ordered locus">LA_1516</name>
</gene>
<feature type="chain" id="PRO_0000377206" description="tRNA dimethylallyltransferase">
    <location>
        <begin position="1"/>
        <end position="297"/>
    </location>
</feature>
<feature type="region of interest" description="Interaction with substrate tRNA" evidence="1">
    <location>
        <begin position="34"/>
        <end position="37"/>
    </location>
</feature>
<feature type="binding site" evidence="1">
    <location>
        <begin position="10"/>
        <end position="17"/>
    </location>
    <ligand>
        <name>ATP</name>
        <dbReference type="ChEBI" id="CHEBI:30616"/>
    </ligand>
</feature>
<feature type="binding site" evidence="1">
    <location>
        <begin position="12"/>
        <end position="17"/>
    </location>
    <ligand>
        <name>substrate</name>
    </ligand>
</feature>
<feature type="site" description="Interaction with substrate tRNA" evidence="1">
    <location>
        <position position="100"/>
    </location>
</feature>
<keyword id="KW-0067">ATP-binding</keyword>
<keyword id="KW-0460">Magnesium</keyword>
<keyword id="KW-0547">Nucleotide-binding</keyword>
<keyword id="KW-1185">Reference proteome</keyword>
<keyword id="KW-0808">Transferase</keyword>
<keyword id="KW-0819">tRNA processing</keyword>
<protein>
    <recommendedName>
        <fullName evidence="1">tRNA dimethylallyltransferase</fullName>
        <ecNumber evidence="1">2.5.1.75</ecNumber>
    </recommendedName>
    <alternativeName>
        <fullName evidence="1">Dimethylallyl diphosphate:tRNA dimethylallyltransferase</fullName>
        <shortName evidence="1">DMAPP:tRNA dimethylallyltransferase</shortName>
        <shortName evidence="1">DMATase</shortName>
    </alternativeName>
    <alternativeName>
        <fullName evidence="1">Isopentenyl-diphosphate:tRNA isopentenyltransferase</fullName>
        <shortName evidence="1">IPP transferase</shortName>
        <shortName evidence="1">IPPT</shortName>
        <shortName evidence="1">IPTase</shortName>
    </alternativeName>
</protein>
<organism>
    <name type="scientific">Leptospira interrogans serogroup Icterohaemorrhagiae serovar Lai (strain 56601)</name>
    <dbReference type="NCBI Taxonomy" id="189518"/>
    <lineage>
        <taxon>Bacteria</taxon>
        <taxon>Pseudomonadati</taxon>
        <taxon>Spirochaetota</taxon>
        <taxon>Spirochaetia</taxon>
        <taxon>Leptospirales</taxon>
        <taxon>Leptospiraceae</taxon>
        <taxon>Leptospira</taxon>
    </lineage>
</organism>
<name>MIAA_LEPIN</name>